<sequence length="432" mass="47916">MPEYVNWLRHASPYINAHRDCTFVVMLPGDGVAHPNFGNIVHDLVLLHSLGVRLVLVHGSRPQIESRLAQRGITPRYHRDLRITDTETLECVIDAVGQLRISIEARLSMDMAASPMQGSRLRVTSGNVVTARPIGVLEGVDYQHTGEVRRVDRKGINRLLDERHIVLLSPLGYSPTGEIFNLACEDVATRAAIDLAADKLLLFGAETGLLDEQGRLVRELRPQQVPAHLQRLGANYQAELLDAAAEACRGGVARSHIVSYAENGALLTELFTRDGGGTLVAQEQFELVREAAIEDVGGLMDLITPLEEQGILVRRSREVLEREITQFSVVEREGLIIACAALYPIADSESGELACLAVNPEYRHGGRGDELLERIENRARALGIKTLFVLTTRTAHWFRERGFEPSSVDRLPSARASLYNYQRNSKIFEKAI</sequence>
<evidence type="ECO:0000255" key="1">
    <source>
        <dbReference type="HAMAP-Rule" id="MF_01105"/>
    </source>
</evidence>
<dbReference type="EC" id="2.3.1.1" evidence="1"/>
<dbReference type="EMBL" id="CP000075">
    <property type="protein sequence ID" value="AAY35327.1"/>
    <property type="molecule type" value="Genomic_DNA"/>
</dbReference>
<dbReference type="RefSeq" id="WP_003403912.1">
    <property type="nucleotide sequence ID" value="NC_007005.1"/>
</dbReference>
<dbReference type="RefSeq" id="YP_233365.1">
    <property type="nucleotide sequence ID" value="NC_007005.1"/>
</dbReference>
<dbReference type="SMR" id="Q4ZZU5"/>
<dbReference type="STRING" id="205918.Psyr_0254"/>
<dbReference type="KEGG" id="psb:Psyr_0254"/>
<dbReference type="PATRIC" id="fig|205918.7.peg.253"/>
<dbReference type="eggNOG" id="COG0548">
    <property type="taxonomic scope" value="Bacteria"/>
</dbReference>
<dbReference type="eggNOG" id="COG1246">
    <property type="taxonomic scope" value="Bacteria"/>
</dbReference>
<dbReference type="HOGENOM" id="CLU_024773_0_0_6"/>
<dbReference type="OrthoDB" id="9802238at2"/>
<dbReference type="UniPathway" id="UPA00068">
    <property type="reaction ID" value="UER00106"/>
</dbReference>
<dbReference type="Proteomes" id="UP000000426">
    <property type="component" value="Chromosome"/>
</dbReference>
<dbReference type="GO" id="GO:0005737">
    <property type="term" value="C:cytoplasm"/>
    <property type="evidence" value="ECO:0007669"/>
    <property type="project" value="UniProtKB-SubCell"/>
</dbReference>
<dbReference type="GO" id="GO:0004042">
    <property type="term" value="F:L-glutamate N-acetyltransferase activity"/>
    <property type="evidence" value="ECO:0007669"/>
    <property type="project" value="UniProtKB-UniRule"/>
</dbReference>
<dbReference type="GO" id="GO:0006526">
    <property type="term" value="P:L-arginine biosynthetic process"/>
    <property type="evidence" value="ECO:0007669"/>
    <property type="project" value="UniProtKB-UniRule"/>
</dbReference>
<dbReference type="CDD" id="cd04237">
    <property type="entry name" value="AAK_NAGS-ABP"/>
    <property type="match status" value="1"/>
</dbReference>
<dbReference type="CDD" id="cd04301">
    <property type="entry name" value="NAT_SF"/>
    <property type="match status" value="1"/>
</dbReference>
<dbReference type="Gene3D" id="3.40.630.30">
    <property type="match status" value="1"/>
</dbReference>
<dbReference type="Gene3D" id="3.40.1160.10">
    <property type="entry name" value="Acetylglutamate kinase-like"/>
    <property type="match status" value="1"/>
</dbReference>
<dbReference type="HAMAP" id="MF_01105">
    <property type="entry name" value="N_acetyl_glu_synth"/>
    <property type="match status" value="1"/>
</dbReference>
<dbReference type="InterPro" id="IPR036393">
    <property type="entry name" value="AceGlu_kinase-like_sf"/>
</dbReference>
<dbReference type="InterPro" id="IPR016181">
    <property type="entry name" value="Acyl_CoA_acyltransferase"/>
</dbReference>
<dbReference type="InterPro" id="IPR001048">
    <property type="entry name" value="Asp/Glu/Uridylate_kinase"/>
</dbReference>
<dbReference type="InterPro" id="IPR000182">
    <property type="entry name" value="GNAT_dom"/>
</dbReference>
<dbReference type="InterPro" id="IPR033719">
    <property type="entry name" value="NAGS_kin"/>
</dbReference>
<dbReference type="InterPro" id="IPR010167">
    <property type="entry name" value="NH2A_AcTrfase"/>
</dbReference>
<dbReference type="NCBIfam" id="TIGR01890">
    <property type="entry name" value="N-Ac-Glu-synth"/>
    <property type="match status" value="1"/>
</dbReference>
<dbReference type="NCBIfam" id="NF003641">
    <property type="entry name" value="PRK05279.1"/>
    <property type="match status" value="1"/>
</dbReference>
<dbReference type="PANTHER" id="PTHR30602">
    <property type="entry name" value="AMINO-ACID ACETYLTRANSFERASE"/>
    <property type="match status" value="1"/>
</dbReference>
<dbReference type="PANTHER" id="PTHR30602:SF12">
    <property type="entry name" value="AMINO-ACID ACETYLTRANSFERASE NAGS1, CHLOROPLASTIC-RELATED"/>
    <property type="match status" value="1"/>
</dbReference>
<dbReference type="Pfam" id="PF00696">
    <property type="entry name" value="AA_kinase"/>
    <property type="match status" value="1"/>
</dbReference>
<dbReference type="Pfam" id="PF13508">
    <property type="entry name" value="Acetyltransf_7"/>
    <property type="match status" value="1"/>
</dbReference>
<dbReference type="PIRSF" id="PIRSF000423">
    <property type="entry name" value="ArgA"/>
    <property type="match status" value="1"/>
</dbReference>
<dbReference type="SUPFAM" id="SSF55729">
    <property type="entry name" value="Acyl-CoA N-acyltransferases (Nat)"/>
    <property type="match status" value="1"/>
</dbReference>
<dbReference type="SUPFAM" id="SSF53633">
    <property type="entry name" value="Carbamate kinase-like"/>
    <property type="match status" value="1"/>
</dbReference>
<dbReference type="PROSITE" id="PS51186">
    <property type="entry name" value="GNAT"/>
    <property type="match status" value="1"/>
</dbReference>
<comment type="catalytic activity">
    <reaction evidence="1">
        <text>L-glutamate + acetyl-CoA = N-acetyl-L-glutamate + CoA + H(+)</text>
        <dbReference type="Rhea" id="RHEA:24292"/>
        <dbReference type="ChEBI" id="CHEBI:15378"/>
        <dbReference type="ChEBI" id="CHEBI:29985"/>
        <dbReference type="ChEBI" id="CHEBI:44337"/>
        <dbReference type="ChEBI" id="CHEBI:57287"/>
        <dbReference type="ChEBI" id="CHEBI:57288"/>
        <dbReference type="EC" id="2.3.1.1"/>
    </reaction>
</comment>
<comment type="pathway">
    <text evidence="1">Amino-acid biosynthesis; L-arginine biosynthesis; N(2)-acetyl-L-ornithine from L-glutamate: step 1/4.</text>
</comment>
<comment type="subcellular location">
    <subcellularLocation>
        <location evidence="1">Cytoplasm</location>
    </subcellularLocation>
</comment>
<comment type="similarity">
    <text evidence="1">Belongs to the acetyltransferase family. ArgA subfamily.</text>
</comment>
<accession>Q4ZZU5</accession>
<feature type="chain" id="PRO_1000084821" description="Amino-acid acetyltransferase">
    <location>
        <begin position="1"/>
        <end position="432"/>
    </location>
</feature>
<feature type="domain" description="N-acetyltransferase" evidence="1">
    <location>
        <begin position="286"/>
        <end position="425"/>
    </location>
</feature>
<proteinExistence type="inferred from homology"/>
<protein>
    <recommendedName>
        <fullName evidence="1">Amino-acid acetyltransferase</fullName>
        <ecNumber evidence="1">2.3.1.1</ecNumber>
    </recommendedName>
    <alternativeName>
        <fullName evidence="1">N-acetylglutamate synthase</fullName>
        <shortName evidence="1">AGS</shortName>
        <shortName evidence="1">NAGS</shortName>
    </alternativeName>
</protein>
<gene>
    <name evidence="1" type="primary">argA</name>
    <name type="ordered locus">Psyr_0254</name>
</gene>
<keyword id="KW-0012">Acyltransferase</keyword>
<keyword id="KW-0028">Amino-acid biosynthesis</keyword>
<keyword id="KW-0055">Arginine biosynthesis</keyword>
<keyword id="KW-0963">Cytoplasm</keyword>
<keyword id="KW-0808">Transferase</keyword>
<organism>
    <name type="scientific">Pseudomonas syringae pv. syringae (strain B728a)</name>
    <dbReference type="NCBI Taxonomy" id="205918"/>
    <lineage>
        <taxon>Bacteria</taxon>
        <taxon>Pseudomonadati</taxon>
        <taxon>Pseudomonadota</taxon>
        <taxon>Gammaproteobacteria</taxon>
        <taxon>Pseudomonadales</taxon>
        <taxon>Pseudomonadaceae</taxon>
        <taxon>Pseudomonas</taxon>
        <taxon>Pseudomonas syringae</taxon>
    </lineage>
</organism>
<reference key="1">
    <citation type="journal article" date="2005" name="Proc. Natl. Acad. Sci. U.S.A.">
        <title>Comparison of the complete genome sequences of Pseudomonas syringae pv. syringae B728a and pv. tomato DC3000.</title>
        <authorList>
            <person name="Feil H."/>
            <person name="Feil W.S."/>
            <person name="Chain P."/>
            <person name="Larimer F."/>
            <person name="Dibartolo G."/>
            <person name="Copeland A."/>
            <person name="Lykidis A."/>
            <person name="Trong S."/>
            <person name="Nolan M."/>
            <person name="Goltsman E."/>
            <person name="Thiel J."/>
            <person name="Malfatti S."/>
            <person name="Loper J.E."/>
            <person name="Lapidus A."/>
            <person name="Detter J.C."/>
            <person name="Land M."/>
            <person name="Richardson P.M."/>
            <person name="Kyrpides N.C."/>
            <person name="Ivanova N."/>
            <person name="Lindow S.E."/>
        </authorList>
    </citation>
    <scope>NUCLEOTIDE SEQUENCE [LARGE SCALE GENOMIC DNA]</scope>
    <source>
        <strain>B728a</strain>
    </source>
</reference>
<name>ARGA_PSEU2</name>